<feature type="chain" id="PRO_0000293127" description="Uncharacterized protein PYRAB15120">
    <location>
        <begin position="1"/>
        <end position="118"/>
    </location>
</feature>
<feature type="region of interest" description="Disordered" evidence="1">
    <location>
        <begin position="98"/>
        <end position="118"/>
    </location>
</feature>
<feature type="compositionally biased region" description="Acidic residues" evidence="1">
    <location>
        <begin position="106"/>
        <end position="118"/>
    </location>
</feature>
<dbReference type="EMBL" id="AJ248287">
    <property type="protein sequence ID" value="CAB50417.1"/>
    <property type="molecule type" value="Genomic_DNA"/>
</dbReference>
<dbReference type="EMBL" id="HE613800">
    <property type="protein sequence ID" value="CCE70966.1"/>
    <property type="molecule type" value="Genomic_DNA"/>
</dbReference>
<dbReference type="PIR" id="D75065">
    <property type="entry name" value="D75065"/>
</dbReference>
<dbReference type="RefSeq" id="WP_048147067.1">
    <property type="nucleotide sequence ID" value="NC_000868.1"/>
</dbReference>
<dbReference type="SMR" id="Q9UYJ5"/>
<dbReference type="STRING" id="272844.PAB1365"/>
<dbReference type="KEGG" id="pab:PAB1365"/>
<dbReference type="PATRIC" id="fig|272844.11.peg.1611"/>
<dbReference type="eggNOG" id="arCOG05854">
    <property type="taxonomic scope" value="Archaea"/>
</dbReference>
<dbReference type="HOGENOM" id="CLU_2271176_0_0_2"/>
<dbReference type="OrthoDB" id="85298at2157"/>
<dbReference type="PhylomeDB" id="Q9UYJ5"/>
<dbReference type="Proteomes" id="UP000000810">
    <property type="component" value="Chromosome"/>
</dbReference>
<dbReference type="Proteomes" id="UP000009139">
    <property type="component" value="Chromosome"/>
</dbReference>
<dbReference type="Gene3D" id="3.30.300.100">
    <property type="entry name" value="MTH677-like"/>
    <property type="match status" value="1"/>
</dbReference>
<dbReference type="InterPro" id="IPR024502">
    <property type="entry name" value="DUF3194"/>
</dbReference>
<dbReference type="InterPro" id="IPR035954">
    <property type="entry name" value="MTH677-like_sf"/>
</dbReference>
<dbReference type="Pfam" id="PF11419">
    <property type="entry name" value="DUF3194"/>
    <property type="match status" value="1"/>
</dbReference>
<dbReference type="SUPFAM" id="SSF110783">
    <property type="entry name" value="Hypothetical protein MTH677"/>
    <property type="match status" value="1"/>
</dbReference>
<organism>
    <name type="scientific">Pyrococcus abyssi (strain GE5 / Orsay)</name>
    <dbReference type="NCBI Taxonomy" id="272844"/>
    <lineage>
        <taxon>Archaea</taxon>
        <taxon>Methanobacteriati</taxon>
        <taxon>Methanobacteriota</taxon>
        <taxon>Thermococci</taxon>
        <taxon>Thermococcales</taxon>
        <taxon>Thermococcaceae</taxon>
        <taxon>Pyrococcus</taxon>
    </lineage>
</organism>
<protein>
    <recommendedName>
        <fullName>Uncharacterized protein PYRAB15120</fullName>
    </recommendedName>
</protein>
<reference key="1">
    <citation type="journal article" date="2003" name="Mol. Microbiol.">
        <title>An integrated analysis of the genome of the hyperthermophilic archaeon Pyrococcus abyssi.</title>
        <authorList>
            <person name="Cohen G.N."/>
            <person name="Barbe V."/>
            <person name="Flament D."/>
            <person name="Galperin M."/>
            <person name="Heilig R."/>
            <person name="Lecompte O."/>
            <person name="Poch O."/>
            <person name="Prieur D."/>
            <person name="Querellou J."/>
            <person name="Ripp R."/>
            <person name="Thierry J.-C."/>
            <person name="Van der Oost J."/>
            <person name="Weissenbach J."/>
            <person name="Zivanovic Y."/>
            <person name="Forterre P."/>
        </authorList>
    </citation>
    <scope>NUCLEOTIDE SEQUENCE [LARGE SCALE GENOMIC DNA]</scope>
    <source>
        <strain>GE5 / Orsay</strain>
    </source>
</reference>
<reference key="2">
    <citation type="journal article" date="2012" name="Curr. Microbiol.">
        <title>Re-annotation of two hyperthermophilic archaea Pyrococcus abyssi GE5 and Pyrococcus furiosus DSM 3638.</title>
        <authorList>
            <person name="Gao J."/>
            <person name="Wang J."/>
        </authorList>
    </citation>
    <scope>GENOME REANNOTATION</scope>
    <source>
        <strain>GE5 / Orsay</strain>
    </source>
</reference>
<sequence>MKKVVHIGLPKLSEDELIEVGEIAQKVIINYIFDHLAKSEVRDMEVTARINQGETLDLELEVYVEVPIFVKVDVESLIDEAIDRAYEVVEEYLRKLAKGKGNEGREEAEEPLEEPEEG</sequence>
<gene>
    <name type="ordered locus">PYRAB15120</name>
    <name type="ORF">PAB1365</name>
</gene>
<proteinExistence type="inferred from homology"/>
<name>Y1512_PYRAB</name>
<accession>Q9UYJ5</accession>
<accession>G8ZIT3</accession>
<comment type="similarity">
    <text evidence="2">Belongs to the UPF0440 family.</text>
</comment>
<evidence type="ECO:0000256" key="1">
    <source>
        <dbReference type="SAM" id="MobiDB-lite"/>
    </source>
</evidence>
<evidence type="ECO:0000305" key="2"/>